<dbReference type="EC" id="1.5.3.-" evidence="1"/>
<dbReference type="EMBL" id="AE006468">
    <property type="protein sequence ID" value="AAL20090.1"/>
    <property type="molecule type" value="Genomic_DNA"/>
</dbReference>
<dbReference type="RefSeq" id="NP_460131.1">
    <property type="nucleotide sequence ID" value="NC_003197.2"/>
</dbReference>
<dbReference type="RefSeq" id="WP_000872773.1">
    <property type="nucleotide sequence ID" value="NC_003197.2"/>
</dbReference>
<dbReference type="SMR" id="P58525"/>
<dbReference type="STRING" id="99287.STM1160"/>
<dbReference type="PaxDb" id="99287-STM1160"/>
<dbReference type="GeneID" id="1252678"/>
<dbReference type="KEGG" id="stm:STM1160"/>
<dbReference type="PATRIC" id="fig|99287.12.peg.1228"/>
<dbReference type="HOGENOM" id="CLU_007884_2_1_6"/>
<dbReference type="OMA" id="WPMLWAH"/>
<dbReference type="PhylomeDB" id="P58525"/>
<dbReference type="BioCyc" id="SENT99287:STM1160-MONOMER"/>
<dbReference type="Proteomes" id="UP000001014">
    <property type="component" value="Chromosome"/>
</dbReference>
<dbReference type="GO" id="GO:0005829">
    <property type="term" value="C:cytosol"/>
    <property type="evidence" value="ECO:0000318"/>
    <property type="project" value="GO_Central"/>
</dbReference>
<dbReference type="GO" id="GO:0050660">
    <property type="term" value="F:flavin adenine dinucleotide binding"/>
    <property type="evidence" value="ECO:0007669"/>
    <property type="project" value="InterPro"/>
</dbReference>
<dbReference type="GO" id="GO:0050131">
    <property type="term" value="F:N-methyl-L-amino-acid oxidase activity"/>
    <property type="evidence" value="ECO:0007669"/>
    <property type="project" value="InterPro"/>
</dbReference>
<dbReference type="GO" id="GO:0008115">
    <property type="term" value="F:sarcosine oxidase activity"/>
    <property type="evidence" value="ECO:0000318"/>
    <property type="project" value="GO_Central"/>
</dbReference>
<dbReference type="Gene3D" id="3.30.9.10">
    <property type="entry name" value="D-Amino Acid Oxidase, subunit A, domain 2"/>
    <property type="match status" value="1"/>
</dbReference>
<dbReference type="Gene3D" id="3.50.50.60">
    <property type="entry name" value="FAD/NAD(P)-binding domain"/>
    <property type="match status" value="1"/>
</dbReference>
<dbReference type="HAMAP" id="MF_00515">
    <property type="entry name" value="MTOX"/>
    <property type="match status" value="1"/>
</dbReference>
<dbReference type="InterPro" id="IPR006076">
    <property type="entry name" value="FAD-dep_OxRdtase"/>
</dbReference>
<dbReference type="InterPro" id="IPR036188">
    <property type="entry name" value="FAD/NAD-bd_sf"/>
</dbReference>
<dbReference type="InterPro" id="IPR023493">
    <property type="entry name" value="Me_Trp_Oxase_MTOX"/>
</dbReference>
<dbReference type="InterPro" id="IPR045170">
    <property type="entry name" value="MTOX"/>
</dbReference>
<dbReference type="NCBIfam" id="NF008425">
    <property type="entry name" value="PRK11259.1"/>
    <property type="match status" value="1"/>
</dbReference>
<dbReference type="PANTHER" id="PTHR10961:SF7">
    <property type="entry name" value="FAD DEPENDENT OXIDOREDUCTASE DOMAIN-CONTAINING PROTEIN"/>
    <property type="match status" value="1"/>
</dbReference>
<dbReference type="PANTHER" id="PTHR10961">
    <property type="entry name" value="PEROXISOMAL SARCOSINE OXIDASE"/>
    <property type="match status" value="1"/>
</dbReference>
<dbReference type="Pfam" id="PF01266">
    <property type="entry name" value="DAO"/>
    <property type="match status" value="1"/>
</dbReference>
<dbReference type="SUPFAM" id="SSF54373">
    <property type="entry name" value="FAD-linked reductases, C-terminal domain"/>
    <property type="match status" value="1"/>
</dbReference>
<dbReference type="SUPFAM" id="SSF51905">
    <property type="entry name" value="FAD/NAD(P)-binding domain"/>
    <property type="match status" value="1"/>
</dbReference>
<name>MTOX_SALTY</name>
<organism>
    <name type="scientific">Salmonella typhimurium (strain LT2 / SGSC1412 / ATCC 700720)</name>
    <dbReference type="NCBI Taxonomy" id="99287"/>
    <lineage>
        <taxon>Bacteria</taxon>
        <taxon>Pseudomonadati</taxon>
        <taxon>Pseudomonadota</taxon>
        <taxon>Gammaproteobacteria</taxon>
        <taxon>Enterobacterales</taxon>
        <taxon>Enterobacteriaceae</taxon>
        <taxon>Salmonella</taxon>
    </lineage>
</organism>
<gene>
    <name evidence="1" type="primary">solA</name>
    <name type="ordered locus">STM1160</name>
</gene>
<feature type="chain" id="PRO_0000213769" description="N-methyl-L-tryptophan oxidase">
    <location>
        <begin position="1"/>
        <end position="372"/>
    </location>
</feature>
<feature type="binding site" evidence="1">
    <location>
        <begin position="4"/>
        <end position="34"/>
    </location>
    <ligand>
        <name>FAD</name>
        <dbReference type="ChEBI" id="CHEBI:57692"/>
    </ligand>
</feature>
<feature type="modified residue" description="S-8alpha-FAD cysteine" evidence="1">
    <location>
        <position position="307"/>
    </location>
</feature>
<keyword id="KW-0274">FAD</keyword>
<keyword id="KW-0285">Flavoprotein</keyword>
<keyword id="KW-0560">Oxidoreductase</keyword>
<keyword id="KW-1185">Reference proteome</keyword>
<protein>
    <recommendedName>
        <fullName evidence="1">N-methyl-L-tryptophan oxidase</fullName>
        <shortName evidence="1">MTOX</shortName>
        <ecNumber evidence="1">1.5.3.-</ecNumber>
    </recommendedName>
</protein>
<accession>P58525</accession>
<proteinExistence type="inferred from homology"/>
<comment type="function">
    <text evidence="1">Catalyzes the oxidative demethylation of N-methyl-L-tryptophan.</text>
</comment>
<comment type="catalytic activity">
    <reaction evidence="1">
        <text>N(alpha)-methyl-L-tryptophan + O2 + H2O = L-tryptophan + formaldehyde + H2O2</text>
        <dbReference type="Rhea" id="RHEA:28006"/>
        <dbReference type="ChEBI" id="CHEBI:15377"/>
        <dbReference type="ChEBI" id="CHEBI:15379"/>
        <dbReference type="ChEBI" id="CHEBI:16240"/>
        <dbReference type="ChEBI" id="CHEBI:16842"/>
        <dbReference type="ChEBI" id="CHEBI:57283"/>
        <dbReference type="ChEBI" id="CHEBI:57912"/>
    </reaction>
</comment>
<comment type="cofactor">
    <cofactor evidence="1">
        <name>FAD</name>
        <dbReference type="ChEBI" id="CHEBI:57692"/>
    </cofactor>
    <text evidence="1">Binds 1 FAD per subunit.</text>
</comment>
<comment type="subunit">
    <text evidence="1">Monomer.</text>
</comment>
<comment type="similarity">
    <text evidence="1">Belongs to the MSOX/MTOX family. MTOX subfamily.</text>
</comment>
<sequence length="372" mass="40664">MKYDLIIIGSGSVGAAAGYYATRAGLKVLMTDAHMPPHQQGSHHGDTRLIRHAYGEGEKYVPLVLRAQTLWDELSTHNEEPIFVRSGVVNLGPADSAFLANVARSAQQWQLNVERLDATALMTRWPEIRVPDNYIGLFEADSGFLRSELAITTWLRLAREAGCAQLFNSPVSHIHHDDNGVTIETSEGCYHASKALISAGTWVKALVPELPVQPVRKVFAWFKADGRYSTKNRFPAFTGEMPNGDQYYGFPAENDELKIGKHNGGQLIQAPEERKPFAAVASDGAEAFPFLRNVLPGIGGCLHGAACTYDNSPDEDFIIDTLPGHENTLVITGLSGHGFKFAPVLGEIAADFALGKTPSFDLTPFRLSRFSQ</sequence>
<evidence type="ECO:0000255" key="1">
    <source>
        <dbReference type="HAMAP-Rule" id="MF_00515"/>
    </source>
</evidence>
<reference key="1">
    <citation type="journal article" date="2001" name="Nature">
        <title>Complete genome sequence of Salmonella enterica serovar Typhimurium LT2.</title>
        <authorList>
            <person name="McClelland M."/>
            <person name="Sanderson K.E."/>
            <person name="Spieth J."/>
            <person name="Clifton S.W."/>
            <person name="Latreille P."/>
            <person name="Courtney L."/>
            <person name="Porwollik S."/>
            <person name="Ali J."/>
            <person name="Dante M."/>
            <person name="Du F."/>
            <person name="Hou S."/>
            <person name="Layman D."/>
            <person name="Leonard S."/>
            <person name="Nguyen C."/>
            <person name="Scott K."/>
            <person name="Holmes A."/>
            <person name="Grewal N."/>
            <person name="Mulvaney E."/>
            <person name="Ryan E."/>
            <person name="Sun H."/>
            <person name="Florea L."/>
            <person name="Miller W."/>
            <person name="Stoneking T."/>
            <person name="Nhan M."/>
            <person name="Waterston R."/>
            <person name="Wilson R.K."/>
        </authorList>
    </citation>
    <scope>NUCLEOTIDE SEQUENCE [LARGE SCALE GENOMIC DNA]</scope>
    <source>
        <strain>LT2 / SGSC1412 / ATCC 700720</strain>
    </source>
</reference>